<evidence type="ECO:0000255" key="1">
    <source>
        <dbReference type="HAMAP-Rule" id="MF_00443"/>
    </source>
</evidence>
<evidence type="ECO:0000305" key="2"/>
<keyword id="KW-0963">Cytoplasm</keyword>
<keyword id="KW-1185">Reference proteome</keyword>
<keyword id="KW-0704">Schiff base</keyword>
<keyword id="KW-0784">Thiamine biosynthesis</keyword>
<keyword id="KW-0808">Transferase</keyword>
<gene>
    <name evidence="1" type="primary">thiG</name>
    <name type="ordered locus">SF4063</name>
    <name type="ordered locus">S3672</name>
</gene>
<name>THIG_SHIFL</name>
<reference key="1">
    <citation type="journal article" date="2002" name="Nucleic Acids Res.">
        <title>Genome sequence of Shigella flexneri 2a: insights into pathogenicity through comparison with genomes of Escherichia coli K12 and O157.</title>
        <authorList>
            <person name="Jin Q."/>
            <person name="Yuan Z."/>
            <person name="Xu J."/>
            <person name="Wang Y."/>
            <person name="Shen Y."/>
            <person name="Lu W."/>
            <person name="Wang J."/>
            <person name="Liu H."/>
            <person name="Yang J."/>
            <person name="Yang F."/>
            <person name="Zhang X."/>
            <person name="Zhang J."/>
            <person name="Yang G."/>
            <person name="Wu H."/>
            <person name="Qu D."/>
            <person name="Dong J."/>
            <person name="Sun L."/>
            <person name="Xue Y."/>
            <person name="Zhao A."/>
            <person name="Gao Y."/>
            <person name="Zhu J."/>
            <person name="Kan B."/>
            <person name="Ding K."/>
            <person name="Chen S."/>
            <person name="Cheng H."/>
            <person name="Yao Z."/>
            <person name="He B."/>
            <person name="Chen R."/>
            <person name="Ma D."/>
            <person name="Qiang B."/>
            <person name="Wen Y."/>
            <person name="Hou Y."/>
            <person name="Yu J."/>
        </authorList>
    </citation>
    <scope>NUCLEOTIDE SEQUENCE [LARGE SCALE GENOMIC DNA]</scope>
    <source>
        <strain>301 / Serotype 2a</strain>
    </source>
</reference>
<reference key="2">
    <citation type="journal article" date="2003" name="Infect. Immun.">
        <title>Complete genome sequence and comparative genomics of Shigella flexneri serotype 2a strain 2457T.</title>
        <authorList>
            <person name="Wei J."/>
            <person name="Goldberg M.B."/>
            <person name="Burland V."/>
            <person name="Venkatesan M.M."/>
            <person name="Deng W."/>
            <person name="Fournier G."/>
            <person name="Mayhew G.F."/>
            <person name="Plunkett G. III"/>
            <person name="Rose D.J."/>
            <person name="Darling A."/>
            <person name="Mau B."/>
            <person name="Perna N.T."/>
            <person name="Payne S.M."/>
            <person name="Runyen-Janecky L.J."/>
            <person name="Zhou S."/>
            <person name="Schwartz D.C."/>
            <person name="Blattner F.R."/>
        </authorList>
    </citation>
    <scope>NUCLEOTIDE SEQUENCE [LARGE SCALE GENOMIC DNA]</scope>
    <source>
        <strain>ATCC 700930 / 2457T / Serotype 2a</strain>
    </source>
</reference>
<accession>Q83PC0</accession>
<accession>Q7UB99</accession>
<protein>
    <recommendedName>
        <fullName evidence="1">Thiazole synthase</fullName>
        <ecNumber evidence="1">2.8.1.10</ecNumber>
    </recommendedName>
</protein>
<comment type="function">
    <text evidence="1">Catalyzes the rearrangement of 1-deoxy-D-xylulose 5-phosphate (DXP) to produce the thiazole phosphate moiety of thiamine. Sulfur is provided by the thiocarboxylate moiety of the carrier protein ThiS. In vitro, sulfur can be provided by H(2)S.</text>
</comment>
<comment type="catalytic activity">
    <reaction evidence="1">
        <text>[ThiS sulfur-carrier protein]-C-terminal-Gly-aminoethanethioate + 2-iminoacetate + 1-deoxy-D-xylulose 5-phosphate = [ThiS sulfur-carrier protein]-C-terminal Gly-Gly + 2-[(2R,5Z)-2-carboxy-4-methylthiazol-5(2H)-ylidene]ethyl phosphate + 2 H2O + H(+)</text>
        <dbReference type="Rhea" id="RHEA:26297"/>
        <dbReference type="Rhea" id="RHEA-COMP:12909"/>
        <dbReference type="Rhea" id="RHEA-COMP:19908"/>
        <dbReference type="ChEBI" id="CHEBI:15377"/>
        <dbReference type="ChEBI" id="CHEBI:15378"/>
        <dbReference type="ChEBI" id="CHEBI:57792"/>
        <dbReference type="ChEBI" id="CHEBI:62899"/>
        <dbReference type="ChEBI" id="CHEBI:77846"/>
        <dbReference type="ChEBI" id="CHEBI:90778"/>
        <dbReference type="ChEBI" id="CHEBI:232372"/>
        <dbReference type="EC" id="2.8.1.10"/>
    </reaction>
</comment>
<comment type="pathway">
    <text evidence="1">Cofactor biosynthesis; thiamine diphosphate biosynthesis.</text>
</comment>
<comment type="subunit">
    <text evidence="1">Homotetramer. Forms heterodimers with either ThiH or ThiS.</text>
</comment>
<comment type="subcellular location">
    <subcellularLocation>
        <location evidence="1">Cytoplasm</location>
    </subcellularLocation>
</comment>
<comment type="similarity">
    <text evidence="1">Belongs to the ThiG family.</text>
</comment>
<comment type="sequence caution" evidence="2">
    <conflict type="erroneous initiation">
        <sequence resource="EMBL-CDS" id="AAN45492"/>
    </conflict>
</comment>
<comment type="sequence caution" evidence="2">
    <conflict type="erroneous initiation">
        <sequence resource="EMBL-CDS" id="AAP18709"/>
    </conflict>
</comment>
<sequence length="256" mass="26924">MLRIADKTFDSHLFTGTGKFASSQLMVEAIRASGSQLVTLAMKRVDLRQHNDAILEPLIAAGVALLPNTSGAKTAEEAIFAAHLAREALGTNWLKLEIHPDARWLLPDPIETLKAAETLVQQGFVVLPYCGADPVLCKRLEEVGCAAVMPLGAPIGSNQGLETRAMLEIIIQQATVPVVVDAGIGVPSHATQALEMGADAVLVNTAIAVADDPVNMAKAFRLAVEVGLLARQSGPGSRSYFAHATSPLTGFLEASA</sequence>
<dbReference type="EC" id="2.8.1.10" evidence="1"/>
<dbReference type="EMBL" id="AE005674">
    <property type="protein sequence ID" value="AAN45492.2"/>
    <property type="status" value="ALT_INIT"/>
    <property type="molecule type" value="Genomic_DNA"/>
</dbReference>
<dbReference type="EMBL" id="AE014073">
    <property type="protein sequence ID" value="AAP18709.1"/>
    <property type="status" value="ALT_INIT"/>
    <property type="molecule type" value="Genomic_DNA"/>
</dbReference>
<dbReference type="RefSeq" id="NP_709785.4">
    <property type="nucleotide sequence ID" value="NC_004337.2"/>
</dbReference>
<dbReference type="RefSeq" id="WP_000944091.1">
    <property type="nucleotide sequence ID" value="NZ_WPGW01000040.1"/>
</dbReference>
<dbReference type="SMR" id="Q83PC0"/>
<dbReference type="STRING" id="198214.SF4063"/>
<dbReference type="PaxDb" id="198214-SF4063"/>
<dbReference type="GeneID" id="1025116"/>
<dbReference type="KEGG" id="sfl:SF4063"/>
<dbReference type="KEGG" id="sfx:S3672"/>
<dbReference type="PATRIC" id="fig|198214.7.peg.4786"/>
<dbReference type="HOGENOM" id="CLU_062233_1_0_6"/>
<dbReference type="UniPathway" id="UPA00060"/>
<dbReference type="Proteomes" id="UP000001006">
    <property type="component" value="Chromosome"/>
</dbReference>
<dbReference type="Proteomes" id="UP000002673">
    <property type="component" value="Chromosome"/>
</dbReference>
<dbReference type="GO" id="GO:0005737">
    <property type="term" value="C:cytoplasm"/>
    <property type="evidence" value="ECO:0007669"/>
    <property type="project" value="UniProtKB-SubCell"/>
</dbReference>
<dbReference type="GO" id="GO:1990107">
    <property type="term" value="F:thiazole synthase activity"/>
    <property type="evidence" value="ECO:0007669"/>
    <property type="project" value="UniProtKB-EC"/>
</dbReference>
<dbReference type="GO" id="GO:0009229">
    <property type="term" value="P:thiamine diphosphate biosynthetic process"/>
    <property type="evidence" value="ECO:0007669"/>
    <property type="project" value="UniProtKB-UniRule"/>
</dbReference>
<dbReference type="CDD" id="cd04728">
    <property type="entry name" value="ThiG"/>
    <property type="match status" value="1"/>
</dbReference>
<dbReference type="FunFam" id="3.20.20.70:FF:000049">
    <property type="entry name" value="Thiazole synthase"/>
    <property type="match status" value="1"/>
</dbReference>
<dbReference type="Gene3D" id="3.20.20.70">
    <property type="entry name" value="Aldolase class I"/>
    <property type="match status" value="1"/>
</dbReference>
<dbReference type="HAMAP" id="MF_00443">
    <property type="entry name" value="ThiG"/>
    <property type="match status" value="1"/>
</dbReference>
<dbReference type="InterPro" id="IPR013785">
    <property type="entry name" value="Aldolase_TIM"/>
</dbReference>
<dbReference type="InterPro" id="IPR033983">
    <property type="entry name" value="Thiazole_synthase_ThiG"/>
</dbReference>
<dbReference type="InterPro" id="IPR008867">
    <property type="entry name" value="ThiG"/>
</dbReference>
<dbReference type="PANTHER" id="PTHR34266">
    <property type="entry name" value="THIAZOLE SYNTHASE"/>
    <property type="match status" value="1"/>
</dbReference>
<dbReference type="PANTHER" id="PTHR34266:SF2">
    <property type="entry name" value="THIAZOLE SYNTHASE"/>
    <property type="match status" value="1"/>
</dbReference>
<dbReference type="Pfam" id="PF05690">
    <property type="entry name" value="ThiG"/>
    <property type="match status" value="1"/>
</dbReference>
<dbReference type="SUPFAM" id="SSF110399">
    <property type="entry name" value="ThiG-like"/>
    <property type="match status" value="1"/>
</dbReference>
<proteinExistence type="inferred from homology"/>
<organism>
    <name type="scientific">Shigella flexneri</name>
    <dbReference type="NCBI Taxonomy" id="623"/>
    <lineage>
        <taxon>Bacteria</taxon>
        <taxon>Pseudomonadati</taxon>
        <taxon>Pseudomonadota</taxon>
        <taxon>Gammaproteobacteria</taxon>
        <taxon>Enterobacterales</taxon>
        <taxon>Enterobacteriaceae</taxon>
        <taxon>Shigella</taxon>
    </lineage>
</organism>
<feature type="chain" id="PRO_0000162859" description="Thiazole synthase">
    <location>
        <begin position="1"/>
        <end position="256"/>
    </location>
</feature>
<feature type="active site" description="Schiff-base intermediate with DXP" evidence="1">
    <location>
        <position position="95"/>
    </location>
</feature>
<feature type="binding site" evidence="1">
    <location>
        <position position="156"/>
    </location>
    <ligand>
        <name>1-deoxy-D-xylulose 5-phosphate</name>
        <dbReference type="ChEBI" id="CHEBI:57792"/>
    </ligand>
</feature>
<feature type="binding site" evidence="1">
    <location>
        <begin position="182"/>
        <end position="183"/>
    </location>
    <ligand>
        <name>1-deoxy-D-xylulose 5-phosphate</name>
        <dbReference type="ChEBI" id="CHEBI:57792"/>
    </ligand>
</feature>
<feature type="binding site" evidence="1">
    <location>
        <begin position="204"/>
        <end position="205"/>
    </location>
    <ligand>
        <name>1-deoxy-D-xylulose 5-phosphate</name>
        <dbReference type="ChEBI" id="CHEBI:57792"/>
    </ligand>
</feature>